<keyword id="KW-1003">Cell membrane</keyword>
<keyword id="KW-0449">Lipoprotein</keyword>
<keyword id="KW-0472">Membrane</keyword>
<keyword id="KW-0564">Palmitate</keyword>
<keyword id="KW-0732">Signal</keyword>
<feature type="signal peptide" evidence="1">
    <location>
        <begin position="1"/>
        <end position="16"/>
    </location>
</feature>
<feature type="chain" id="PRO_1000136554" description="UPF0257 lipoprotein YnfC">
    <location>
        <begin position="17"/>
        <end position="236"/>
    </location>
</feature>
<feature type="lipid moiety-binding region" description="N-palmitoyl cysteine" evidence="1">
    <location>
        <position position="17"/>
    </location>
</feature>
<feature type="lipid moiety-binding region" description="S-diacylglycerol cysteine" evidence="1">
    <location>
        <position position="17"/>
    </location>
</feature>
<name>YNFC_ECODH</name>
<gene>
    <name evidence="1" type="primary">ynfC</name>
    <name type="ordered locus">ECDH10B_1718</name>
</gene>
<comment type="subcellular location">
    <subcellularLocation>
        <location evidence="1">Cell membrane</location>
        <topology evidence="1">Lipid-anchor</topology>
    </subcellularLocation>
</comment>
<comment type="similarity">
    <text evidence="1">Belongs to the UPF0257 family.</text>
</comment>
<protein>
    <recommendedName>
        <fullName evidence="1">UPF0257 lipoprotein YnfC</fullName>
    </recommendedName>
</protein>
<accession>B1XF50</accession>
<organism>
    <name type="scientific">Escherichia coli (strain K12 / DH10B)</name>
    <dbReference type="NCBI Taxonomy" id="316385"/>
    <lineage>
        <taxon>Bacteria</taxon>
        <taxon>Pseudomonadati</taxon>
        <taxon>Pseudomonadota</taxon>
        <taxon>Gammaproteobacteria</taxon>
        <taxon>Enterobacterales</taxon>
        <taxon>Enterobacteriaceae</taxon>
        <taxon>Escherichia</taxon>
    </lineage>
</organism>
<evidence type="ECO:0000255" key="1">
    <source>
        <dbReference type="HAMAP-Rule" id="MF_01065"/>
    </source>
</evidence>
<reference key="1">
    <citation type="journal article" date="2008" name="J. Bacteriol.">
        <title>The complete genome sequence of Escherichia coli DH10B: insights into the biology of a laboratory workhorse.</title>
        <authorList>
            <person name="Durfee T."/>
            <person name="Nelson R."/>
            <person name="Baldwin S."/>
            <person name="Plunkett G. III"/>
            <person name="Burland V."/>
            <person name="Mau B."/>
            <person name="Petrosino J.F."/>
            <person name="Qin X."/>
            <person name="Muzny D.M."/>
            <person name="Ayele M."/>
            <person name="Gibbs R.A."/>
            <person name="Csorgo B."/>
            <person name="Posfai G."/>
            <person name="Weinstock G.M."/>
            <person name="Blattner F.R."/>
        </authorList>
    </citation>
    <scope>NUCLEOTIDE SEQUENCE [LARGE SCALE GENOMIC DNA]</scope>
    <source>
        <strain>K12 / DH10B</strain>
    </source>
</reference>
<proteinExistence type="inferred from homology"/>
<sequence>MKYKLLPCLLAIFLTGCDRTEVTLSFTPEMASFSNEFDFDPLRGPVKDFTQTLMDEQGEVTKRVSGTLSEEGCFDSLELLDLENNTVVALVLDANYYRDAETLEKRVRLQGKCQLAELPSAGVSWETDDNGFVIKASSKQMQMEYRYDDQGYPLGKTTKSNDKTLSVSATPSTDPIKKLDYTAVTLLNNQRVGNVKQSCEYDSHANPVDCQLIIVDEGVKPAVERVYTIKNTIDYY</sequence>
<dbReference type="EMBL" id="CP000948">
    <property type="protein sequence ID" value="ACB02791.1"/>
    <property type="molecule type" value="Genomic_DNA"/>
</dbReference>
<dbReference type="RefSeq" id="WP_001321287.1">
    <property type="nucleotide sequence ID" value="NC_010473.1"/>
</dbReference>
<dbReference type="SMR" id="B1XF50"/>
<dbReference type="KEGG" id="ecd:ECDH10B_1718"/>
<dbReference type="HOGENOM" id="CLU_1174761_0_0_6"/>
<dbReference type="GO" id="GO:0005886">
    <property type="term" value="C:plasma membrane"/>
    <property type="evidence" value="ECO:0007669"/>
    <property type="project" value="UniProtKB-SubCell"/>
</dbReference>
<dbReference type="HAMAP" id="MF_01065">
    <property type="entry name" value="UPF0257"/>
    <property type="match status" value="1"/>
</dbReference>
<dbReference type="InterPro" id="IPR010646">
    <property type="entry name" value="UPF0257"/>
</dbReference>
<dbReference type="NCBIfam" id="NF002798">
    <property type="entry name" value="PRK02939.1"/>
    <property type="match status" value="1"/>
</dbReference>
<dbReference type="Pfam" id="PF06788">
    <property type="entry name" value="UPF0257"/>
    <property type="match status" value="1"/>
</dbReference>
<dbReference type="PROSITE" id="PS51257">
    <property type="entry name" value="PROKAR_LIPOPROTEIN"/>
    <property type="match status" value="1"/>
</dbReference>